<dbReference type="EMBL" id="AK031257">
    <property type="protein sequence ID" value="BAC27324.1"/>
    <property type="molecule type" value="mRNA"/>
</dbReference>
<dbReference type="EMBL" id="AC174646">
    <property type="status" value="NOT_ANNOTATED_CDS"/>
    <property type="molecule type" value="Genomic_DNA"/>
</dbReference>
<dbReference type="CCDS" id="CCDS23545.1"/>
<dbReference type="RefSeq" id="NP_766362.2">
    <property type="nucleotide sequence ID" value="NM_172774.3"/>
</dbReference>
<dbReference type="SMR" id="Q8BMG1"/>
<dbReference type="BioGRID" id="231691">
    <property type="interactions" value="1"/>
</dbReference>
<dbReference type="ComplexPortal" id="CPX-3623">
    <property type="entry name" value="ATR-ATRIP DNA damage-sensing kinase complex"/>
</dbReference>
<dbReference type="FunCoup" id="Q8BMG1">
    <property type="interactions" value="2907"/>
</dbReference>
<dbReference type="IntAct" id="Q8BMG1">
    <property type="interactions" value="2"/>
</dbReference>
<dbReference type="MINT" id="Q8BMG1"/>
<dbReference type="STRING" id="10090.ENSMUSP00000044831"/>
<dbReference type="GlyGen" id="Q8BMG1">
    <property type="glycosylation" value="1 site, 1 N-linked glycan (1 site)"/>
</dbReference>
<dbReference type="iPTMnet" id="Q8BMG1"/>
<dbReference type="PhosphoSitePlus" id="Q8BMG1"/>
<dbReference type="jPOST" id="Q8BMG1"/>
<dbReference type="PaxDb" id="10090-ENSMUSP00000044831"/>
<dbReference type="ProteomicsDB" id="265182"/>
<dbReference type="Pumba" id="Q8BMG1"/>
<dbReference type="Antibodypedia" id="30090">
    <property type="antibodies" value="600 antibodies from 37 providers"/>
</dbReference>
<dbReference type="DNASU" id="235610"/>
<dbReference type="Ensembl" id="ENSMUST00000045011.9">
    <property type="protein sequence ID" value="ENSMUSP00000044831.3"/>
    <property type="gene ID" value="ENSMUSG00000025646.10"/>
</dbReference>
<dbReference type="GeneID" id="235610"/>
<dbReference type="KEGG" id="mmu:235610"/>
<dbReference type="UCSC" id="uc009rru.2">
    <property type="organism name" value="mouse"/>
</dbReference>
<dbReference type="AGR" id="MGI:1925349"/>
<dbReference type="CTD" id="84126"/>
<dbReference type="MGI" id="MGI:1925349">
    <property type="gene designation" value="Atrip"/>
</dbReference>
<dbReference type="VEuPathDB" id="HostDB:ENSMUSG00000025646"/>
<dbReference type="eggNOG" id="ENOG502QQF4">
    <property type="taxonomic scope" value="Eukaryota"/>
</dbReference>
<dbReference type="GeneTree" id="ENSGT00390000012850"/>
<dbReference type="InParanoid" id="Q8BMG1"/>
<dbReference type="OMA" id="CALAQHH"/>
<dbReference type="OrthoDB" id="6428926at2759"/>
<dbReference type="PhylomeDB" id="Q8BMG1"/>
<dbReference type="TreeFam" id="TF324417"/>
<dbReference type="Reactome" id="R-MMU-176187">
    <property type="pathway name" value="Activation of ATR in response to replication stress"/>
</dbReference>
<dbReference type="Reactome" id="R-MMU-5685938">
    <property type="pathway name" value="HDR through Single Strand Annealing (SSA)"/>
</dbReference>
<dbReference type="Reactome" id="R-MMU-5693607">
    <property type="pathway name" value="Processing of DNA double-strand break ends"/>
</dbReference>
<dbReference type="Reactome" id="R-MMU-6783310">
    <property type="pathway name" value="Fanconi Anemia Pathway"/>
</dbReference>
<dbReference type="Reactome" id="R-MMU-6804756">
    <property type="pathway name" value="Regulation of TP53 Activity through Phosphorylation"/>
</dbReference>
<dbReference type="Reactome" id="R-MMU-69473">
    <property type="pathway name" value="G2/M DNA damage checkpoint"/>
</dbReference>
<dbReference type="BioGRID-ORCS" id="235610">
    <property type="hits" value="23 hits in 81 CRISPR screens"/>
</dbReference>
<dbReference type="ChiTaRS" id="Atrip">
    <property type="organism name" value="mouse"/>
</dbReference>
<dbReference type="PRO" id="PR:Q8BMG1"/>
<dbReference type="Proteomes" id="UP000000589">
    <property type="component" value="Chromosome 9"/>
</dbReference>
<dbReference type="RNAct" id="Q8BMG1">
    <property type="molecule type" value="protein"/>
</dbReference>
<dbReference type="Bgee" id="ENSMUSG00000025646">
    <property type="expression patterns" value="Expressed in epiblast cell in embryo and 104 other cell types or tissues"/>
</dbReference>
<dbReference type="ExpressionAtlas" id="Q8BMG1">
    <property type="expression patterns" value="baseline and differential"/>
</dbReference>
<dbReference type="GO" id="GO:0070310">
    <property type="term" value="C:ATR-ATRIP complex"/>
    <property type="evidence" value="ECO:0000353"/>
    <property type="project" value="ComplexPortal"/>
</dbReference>
<dbReference type="GO" id="GO:0005654">
    <property type="term" value="C:nucleoplasm"/>
    <property type="evidence" value="ECO:0007669"/>
    <property type="project" value="Ensembl"/>
</dbReference>
<dbReference type="GO" id="GO:0005634">
    <property type="term" value="C:nucleus"/>
    <property type="evidence" value="ECO:0000303"/>
    <property type="project" value="ComplexPortal"/>
</dbReference>
<dbReference type="GO" id="GO:0070530">
    <property type="term" value="F:K63-linked polyubiquitin modification-dependent protein binding"/>
    <property type="evidence" value="ECO:0000250"/>
    <property type="project" value="UniProtKB"/>
</dbReference>
<dbReference type="GO" id="GO:0000077">
    <property type="term" value="P:DNA damage checkpoint signaling"/>
    <property type="evidence" value="ECO:0007669"/>
    <property type="project" value="InterPro"/>
</dbReference>
<dbReference type="GO" id="GO:0006281">
    <property type="term" value="P:DNA repair"/>
    <property type="evidence" value="ECO:0007669"/>
    <property type="project" value="UniProtKB-KW"/>
</dbReference>
<dbReference type="GO" id="GO:0006139">
    <property type="term" value="P:nucleobase-containing compound metabolic process"/>
    <property type="evidence" value="ECO:0000303"/>
    <property type="project" value="ComplexPortal"/>
</dbReference>
<dbReference type="GO" id="GO:2000779">
    <property type="term" value="P:regulation of double-strand break repair"/>
    <property type="evidence" value="ECO:0000303"/>
    <property type="project" value="ComplexPortal"/>
</dbReference>
<dbReference type="InterPro" id="IPR033349">
    <property type="entry name" value="ATRIP"/>
</dbReference>
<dbReference type="PANTHER" id="PTHR28594">
    <property type="entry name" value="ATR-INTERACTING PROTEIN"/>
    <property type="match status" value="1"/>
</dbReference>
<dbReference type="PANTHER" id="PTHR28594:SF1">
    <property type="entry name" value="ATR-INTERACTING PROTEIN"/>
    <property type="match status" value="1"/>
</dbReference>
<name>ATRIP_MOUSE</name>
<sequence>MAGTPAPNSHRKQSGGLEPFPGLSRSIENPPSKRARSFSETTVPDPEDPFGEHAEFTADDLEELDILASQALSQCPVAPRNLSSAHKVRRLDGLPNSPIRKSREDIPVKDNFELEVLQIQYKELKEKLKAMEEEILIKNGEIKILRDSLRQTESVLEEQKRSHFLLEQEKTQALSEKEKEFSRKLQSLQSELQFKDAEMNELRTKSQSNGRTNKPAAPSVSHVSPRKGSSVVLKSEACSPHVGKTTFPTKESFSANTPLFHPCQTEAGHRFLVGQEVSDNKNHSLGGSLMKQDVQQRILADGWMQRKDAQGSILINLLLKQPLVPGSSLGLCHLLSSCPEVPTGTLLQPPGLSTLPGTSGLRTISSSDGPFSPSALREAQNLAFTGLNLVARTESSHDGDMAGRRVFPLHQLPGAVHLLPLVQFFVGLHCQALQDLAPAKKSGVPGDSATHTSCMSSGVEASPEDSIHGLESFSVASLSVLQNLVCHSGAVVCLLLSGMGTEAAAREGNLVQTCADTTSASREDAHDQDQHPLLKMLLQLMASSSAASGHFQASVLGLCLKVLVKLAENASSDLLPRFSCVFPVLPQCLGSALPLPCVLLAVELLSVLLDHDSLAWQLCSHPEGCLLLRLYMYITSRPDRTASETQWLQLEQEVVWLLAKLSVQSPAPAGIGSDCHCNVEAVRALTVMLHRQWLTVRRAGGPRTHQQKQTIRCLRDTVLLLHSLSQKDKLFTVHCVEVLHQYDQVMPGVSMLIRALPDVTDCEEAALDDLCAAETDLEDSEMDCN</sequence>
<gene>
    <name type="primary">Atrip</name>
</gene>
<feature type="chain" id="PRO_0000064742" description="ATR-interacting protein">
    <location>
        <begin position="1"/>
        <end position="785"/>
    </location>
</feature>
<feature type="region of interest" description="Disordered" evidence="3">
    <location>
        <begin position="1"/>
        <end position="53"/>
    </location>
</feature>
<feature type="region of interest" description="Interaction with CINP" evidence="1">
    <location>
        <begin position="118"/>
        <end position="156"/>
    </location>
</feature>
<feature type="region of interest" description="Disordered" evidence="3">
    <location>
        <begin position="201"/>
        <end position="227"/>
    </location>
</feature>
<feature type="coiled-coil region" evidence="2">
    <location>
        <begin position="108"/>
        <end position="209"/>
    </location>
</feature>
<feature type="short sequence motif" description="EEXXXDL motif">
    <location>
        <begin position="763"/>
        <end position="770"/>
    </location>
</feature>
<feature type="sequence conflict" description="In Ref. 1; BAC27324." evidence="5" ref="1">
    <original>P</original>
    <variation>A</variation>
    <location>
        <position position="408"/>
    </location>
</feature>
<feature type="sequence conflict" description="In Ref. 1; BAC27324." evidence="5" ref="1">
    <original>S</original>
    <variation>R</variation>
    <location>
        <position position="462"/>
    </location>
</feature>
<evidence type="ECO:0000250" key="1"/>
<evidence type="ECO:0000255" key="2"/>
<evidence type="ECO:0000256" key="3">
    <source>
        <dbReference type="SAM" id="MobiDB-lite"/>
    </source>
</evidence>
<evidence type="ECO:0000269" key="4">
    <source>
    </source>
</evidence>
<evidence type="ECO:0000305" key="5"/>
<organism>
    <name type="scientific">Mus musculus</name>
    <name type="common">Mouse</name>
    <dbReference type="NCBI Taxonomy" id="10090"/>
    <lineage>
        <taxon>Eukaryota</taxon>
        <taxon>Metazoa</taxon>
        <taxon>Chordata</taxon>
        <taxon>Craniata</taxon>
        <taxon>Vertebrata</taxon>
        <taxon>Euteleostomi</taxon>
        <taxon>Mammalia</taxon>
        <taxon>Eutheria</taxon>
        <taxon>Euarchontoglires</taxon>
        <taxon>Glires</taxon>
        <taxon>Rodentia</taxon>
        <taxon>Myomorpha</taxon>
        <taxon>Muroidea</taxon>
        <taxon>Muridae</taxon>
        <taxon>Murinae</taxon>
        <taxon>Mus</taxon>
        <taxon>Mus</taxon>
    </lineage>
</organism>
<protein>
    <recommendedName>
        <fullName>ATR-interacting protein</fullName>
    </recommendedName>
    <alternativeName>
        <fullName>ATM and Rad3-related-interacting protein</fullName>
    </alternativeName>
</protein>
<reference key="1">
    <citation type="journal article" date="2005" name="Science">
        <title>The transcriptional landscape of the mammalian genome.</title>
        <authorList>
            <person name="Carninci P."/>
            <person name="Kasukawa T."/>
            <person name="Katayama S."/>
            <person name="Gough J."/>
            <person name="Frith M.C."/>
            <person name="Maeda N."/>
            <person name="Oyama R."/>
            <person name="Ravasi T."/>
            <person name="Lenhard B."/>
            <person name="Wells C."/>
            <person name="Kodzius R."/>
            <person name="Shimokawa K."/>
            <person name="Bajic V.B."/>
            <person name="Brenner S.E."/>
            <person name="Batalov S."/>
            <person name="Forrest A.R."/>
            <person name="Zavolan M."/>
            <person name="Davis M.J."/>
            <person name="Wilming L.G."/>
            <person name="Aidinis V."/>
            <person name="Allen J.E."/>
            <person name="Ambesi-Impiombato A."/>
            <person name="Apweiler R."/>
            <person name="Aturaliya R.N."/>
            <person name="Bailey T.L."/>
            <person name="Bansal M."/>
            <person name="Baxter L."/>
            <person name="Beisel K.W."/>
            <person name="Bersano T."/>
            <person name="Bono H."/>
            <person name="Chalk A.M."/>
            <person name="Chiu K.P."/>
            <person name="Choudhary V."/>
            <person name="Christoffels A."/>
            <person name="Clutterbuck D.R."/>
            <person name="Crowe M.L."/>
            <person name="Dalla E."/>
            <person name="Dalrymple B.P."/>
            <person name="de Bono B."/>
            <person name="Della Gatta G."/>
            <person name="di Bernardo D."/>
            <person name="Down T."/>
            <person name="Engstrom P."/>
            <person name="Fagiolini M."/>
            <person name="Faulkner G."/>
            <person name="Fletcher C.F."/>
            <person name="Fukushima T."/>
            <person name="Furuno M."/>
            <person name="Futaki S."/>
            <person name="Gariboldi M."/>
            <person name="Georgii-Hemming P."/>
            <person name="Gingeras T.R."/>
            <person name="Gojobori T."/>
            <person name="Green R.E."/>
            <person name="Gustincich S."/>
            <person name="Harbers M."/>
            <person name="Hayashi Y."/>
            <person name="Hensch T.K."/>
            <person name="Hirokawa N."/>
            <person name="Hill D."/>
            <person name="Huminiecki L."/>
            <person name="Iacono M."/>
            <person name="Ikeo K."/>
            <person name="Iwama A."/>
            <person name="Ishikawa T."/>
            <person name="Jakt M."/>
            <person name="Kanapin A."/>
            <person name="Katoh M."/>
            <person name="Kawasawa Y."/>
            <person name="Kelso J."/>
            <person name="Kitamura H."/>
            <person name="Kitano H."/>
            <person name="Kollias G."/>
            <person name="Krishnan S.P."/>
            <person name="Kruger A."/>
            <person name="Kummerfeld S.K."/>
            <person name="Kurochkin I.V."/>
            <person name="Lareau L.F."/>
            <person name="Lazarevic D."/>
            <person name="Lipovich L."/>
            <person name="Liu J."/>
            <person name="Liuni S."/>
            <person name="McWilliam S."/>
            <person name="Madan Babu M."/>
            <person name="Madera M."/>
            <person name="Marchionni L."/>
            <person name="Matsuda H."/>
            <person name="Matsuzawa S."/>
            <person name="Miki H."/>
            <person name="Mignone F."/>
            <person name="Miyake S."/>
            <person name="Morris K."/>
            <person name="Mottagui-Tabar S."/>
            <person name="Mulder N."/>
            <person name="Nakano N."/>
            <person name="Nakauchi H."/>
            <person name="Ng P."/>
            <person name="Nilsson R."/>
            <person name="Nishiguchi S."/>
            <person name="Nishikawa S."/>
            <person name="Nori F."/>
            <person name="Ohara O."/>
            <person name="Okazaki Y."/>
            <person name="Orlando V."/>
            <person name="Pang K.C."/>
            <person name="Pavan W.J."/>
            <person name="Pavesi G."/>
            <person name="Pesole G."/>
            <person name="Petrovsky N."/>
            <person name="Piazza S."/>
            <person name="Reed J."/>
            <person name="Reid J.F."/>
            <person name="Ring B.Z."/>
            <person name="Ringwald M."/>
            <person name="Rost B."/>
            <person name="Ruan Y."/>
            <person name="Salzberg S.L."/>
            <person name="Sandelin A."/>
            <person name="Schneider C."/>
            <person name="Schoenbach C."/>
            <person name="Sekiguchi K."/>
            <person name="Semple C.A."/>
            <person name="Seno S."/>
            <person name="Sessa L."/>
            <person name="Sheng Y."/>
            <person name="Shibata Y."/>
            <person name="Shimada H."/>
            <person name="Shimada K."/>
            <person name="Silva D."/>
            <person name="Sinclair B."/>
            <person name="Sperling S."/>
            <person name="Stupka E."/>
            <person name="Sugiura K."/>
            <person name="Sultana R."/>
            <person name="Takenaka Y."/>
            <person name="Taki K."/>
            <person name="Tammoja K."/>
            <person name="Tan S.L."/>
            <person name="Tang S."/>
            <person name="Taylor M.S."/>
            <person name="Tegner J."/>
            <person name="Teichmann S.A."/>
            <person name="Ueda H.R."/>
            <person name="van Nimwegen E."/>
            <person name="Verardo R."/>
            <person name="Wei C.L."/>
            <person name="Yagi K."/>
            <person name="Yamanishi H."/>
            <person name="Zabarovsky E."/>
            <person name="Zhu S."/>
            <person name="Zimmer A."/>
            <person name="Hide W."/>
            <person name="Bult C."/>
            <person name="Grimmond S.M."/>
            <person name="Teasdale R.D."/>
            <person name="Liu E.T."/>
            <person name="Brusic V."/>
            <person name="Quackenbush J."/>
            <person name="Wahlestedt C."/>
            <person name="Mattick J.S."/>
            <person name="Hume D.A."/>
            <person name="Kai C."/>
            <person name="Sasaki D."/>
            <person name="Tomaru Y."/>
            <person name="Fukuda S."/>
            <person name="Kanamori-Katayama M."/>
            <person name="Suzuki M."/>
            <person name="Aoki J."/>
            <person name="Arakawa T."/>
            <person name="Iida J."/>
            <person name="Imamura K."/>
            <person name="Itoh M."/>
            <person name="Kato T."/>
            <person name="Kawaji H."/>
            <person name="Kawagashira N."/>
            <person name="Kawashima T."/>
            <person name="Kojima M."/>
            <person name="Kondo S."/>
            <person name="Konno H."/>
            <person name="Nakano K."/>
            <person name="Ninomiya N."/>
            <person name="Nishio T."/>
            <person name="Okada M."/>
            <person name="Plessy C."/>
            <person name="Shibata K."/>
            <person name="Shiraki T."/>
            <person name="Suzuki S."/>
            <person name="Tagami M."/>
            <person name="Waki K."/>
            <person name="Watahiki A."/>
            <person name="Okamura-Oho Y."/>
            <person name="Suzuki H."/>
            <person name="Kawai J."/>
            <person name="Hayashizaki Y."/>
        </authorList>
    </citation>
    <scope>NUCLEOTIDE SEQUENCE [LARGE SCALE MRNA]</scope>
    <source>
        <strain>C57BL/6J</strain>
        <tissue>Forelimb</tissue>
    </source>
</reference>
<reference key="2">
    <citation type="journal article" date="2009" name="PLoS Biol.">
        <title>Lineage-specific biology revealed by a finished genome assembly of the mouse.</title>
        <authorList>
            <person name="Church D.M."/>
            <person name="Goodstadt L."/>
            <person name="Hillier L.W."/>
            <person name="Zody M.C."/>
            <person name="Goldstein S."/>
            <person name="She X."/>
            <person name="Bult C.J."/>
            <person name="Agarwala R."/>
            <person name="Cherry J.L."/>
            <person name="DiCuccio M."/>
            <person name="Hlavina W."/>
            <person name="Kapustin Y."/>
            <person name="Meric P."/>
            <person name="Maglott D."/>
            <person name="Birtle Z."/>
            <person name="Marques A.C."/>
            <person name="Graves T."/>
            <person name="Zhou S."/>
            <person name="Teague B."/>
            <person name="Potamousis K."/>
            <person name="Churas C."/>
            <person name="Place M."/>
            <person name="Herschleb J."/>
            <person name="Runnheim R."/>
            <person name="Forrest D."/>
            <person name="Amos-Landgraf J."/>
            <person name="Schwartz D.C."/>
            <person name="Cheng Z."/>
            <person name="Lindblad-Toh K."/>
            <person name="Eichler E.E."/>
            <person name="Ponting C.P."/>
        </authorList>
    </citation>
    <scope>NUCLEOTIDE SEQUENCE [LARGE SCALE GENOMIC DNA]</scope>
    <source>
        <strain>C57BL/6J</strain>
    </source>
</reference>
<reference key="3">
    <citation type="journal article" date="2010" name="Cell">
        <title>A tissue-specific atlas of mouse protein phosphorylation and expression.</title>
        <authorList>
            <person name="Huttlin E.L."/>
            <person name="Jedrychowski M.P."/>
            <person name="Elias J.E."/>
            <person name="Goswami T."/>
            <person name="Rad R."/>
            <person name="Beausoleil S.A."/>
            <person name="Villen J."/>
            <person name="Haas W."/>
            <person name="Sowa M.E."/>
            <person name="Gygi S.P."/>
        </authorList>
    </citation>
    <scope>IDENTIFICATION BY MASS SPECTROMETRY [LARGE SCALE ANALYSIS]</scope>
    <source>
        <tissue>Testis</tissue>
    </source>
</reference>
<reference key="4">
    <citation type="journal article" date="2010" name="Genes Dev.">
        <title>Tel2 structure and function in the Hsp90-dependent maturation of mTOR and ATR complexes.</title>
        <authorList>
            <person name="Takai H."/>
            <person name="Xie Y."/>
            <person name="de Lange T."/>
            <person name="Pavletich N.P."/>
        </authorList>
    </citation>
    <scope>INTERACTION WITH ATR</scope>
</reference>
<accession>Q8BMG1</accession>
<accession>E9QLS8</accession>
<keyword id="KW-0175">Coiled coil</keyword>
<keyword id="KW-0227">DNA damage</keyword>
<keyword id="KW-0234">DNA repair</keyword>
<keyword id="KW-0539">Nucleus</keyword>
<keyword id="KW-0597">Phosphoprotein</keyword>
<keyword id="KW-1185">Reference proteome</keyword>
<proteinExistence type="evidence at protein level"/>
<comment type="function">
    <text evidence="1">Required for checkpoint signaling after DNA damage. Required for ATR expression, possibly by stabilizing the protein (By similarity).</text>
</comment>
<comment type="subunit">
    <text evidence="1 4">Heterodimer with ATR. The heterodimer binds the RPA complex and is then recruited to single-stranded DNA. Interacts with CINP (By similarity). Interacts with ATR.</text>
</comment>
<comment type="interaction">
    <interactant intactId="EBI-5235246">
        <id>Q8BMG1</id>
    </interactant>
    <interactant intactId="EBI-1202426">
        <id>Q9JKK8</id>
        <label>Atr</label>
    </interactant>
    <organismsDiffer>false</organismsDiffer>
    <experiments>2</experiments>
</comment>
<comment type="subcellular location">
    <subcellularLocation>
        <location evidence="1">Nucleus</location>
    </subcellularLocation>
    <text evidence="1">Redistributes to discrete nuclear foci upon DNA damage. Interacts with CEP164 (via N-terminus) (By similarity).</text>
</comment>
<comment type="domain">
    <text evidence="1">The EEXXXDDL motif is required for the interaction with catalytic subunit PRKDC and its recruitment to sites of DNA damage.</text>
</comment>
<comment type="PTM">
    <text evidence="1">Phosphorylated by ATR.</text>
</comment>
<comment type="similarity">
    <text evidence="5">Belongs to the ATRIP family.</text>
</comment>